<reference key="1">
    <citation type="journal article" date="1992" name="Proc. Natl. Acad. Sci. U.S.A.">
        <title>Mutational and nucleotide sequence analysis of S-adenosyl-L-homocysteine hydrolase from Rhodobacter capsulatus.</title>
        <authorList>
            <person name="Sganga M.W."/>
            <person name="Aksamit R.R."/>
            <person name="Cantoni G.L."/>
            <person name="Bauer C.E."/>
        </authorList>
    </citation>
    <scope>NUCLEOTIDE SEQUENCE [GENOMIC DNA]</scope>
    <source>
        <strain>ATCC BAA-309 / NBRC 16581 / SB1003</strain>
    </source>
</reference>
<reference key="2">
    <citation type="journal article" date="2010" name="J. Bacteriol.">
        <title>Complete genome sequence of the photosynthetic purple nonsulfur bacterium Rhodobacter capsulatus SB 1003.</title>
        <authorList>
            <person name="Strnad H."/>
            <person name="Lapidus A."/>
            <person name="Paces J."/>
            <person name="Ulbrich P."/>
            <person name="Vlcek C."/>
            <person name="Paces V."/>
            <person name="Haselkorn R."/>
        </authorList>
    </citation>
    <scope>NUCLEOTIDE SEQUENCE [LARGE SCALE GENOMIC DNA]</scope>
    <source>
        <strain>ATCC BAA-309 / NBRC 16581 / SB1003</strain>
    </source>
</reference>
<reference key="3">
    <citation type="journal article" date="1994" name="J. Bacteriol.">
        <title>Nucleotide sequence and characterization of the Rhodobacter capsulatus hvrB gene: HvrB is an activator of S-adenosyl-L-homocysteine hydrolase expression and is a member of the LysR family.</title>
        <authorList>
            <person name="Buggy J.J."/>
            <person name="Sganga M.W."/>
            <person name="Bauer C.E."/>
        </authorList>
    </citation>
    <scope>NUCLEOTIDE SEQUENCE [GENOMIC DNA] OF 1-13</scope>
    <source>
        <strain>ATCC BAA-309 / NBRC 16581 / SB1003</strain>
    </source>
</reference>
<accession>P28183</accession>
<accession>D5AKH2</accession>
<proteinExistence type="inferred from homology"/>
<dbReference type="EC" id="3.13.2.1" evidence="1"/>
<dbReference type="EMBL" id="M80630">
    <property type="protein sequence ID" value="AAA26094.1"/>
    <property type="molecule type" value="Genomic_DNA"/>
</dbReference>
<dbReference type="EMBL" id="CP001312">
    <property type="protein sequence ID" value="ADE83814.1"/>
    <property type="molecule type" value="Genomic_DNA"/>
</dbReference>
<dbReference type="EMBL" id="L23836">
    <property type="protein sequence ID" value="AAA53540.1"/>
    <property type="molecule type" value="Genomic_DNA"/>
</dbReference>
<dbReference type="PIR" id="A46035">
    <property type="entry name" value="A46035"/>
</dbReference>
<dbReference type="RefSeq" id="WP_013065796.1">
    <property type="nucleotide sequence ID" value="NC_014034.1"/>
</dbReference>
<dbReference type="SMR" id="P28183"/>
<dbReference type="STRING" id="272942.RCAP_rcc00049"/>
<dbReference type="GeneID" id="31489006"/>
<dbReference type="KEGG" id="rcp:RCAP_rcc00049"/>
<dbReference type="eggNOG" id="COG0499">
    <property type="taxonomic scope" value="Bacteria"/>
</dbReference>
<dbReference type="HOGENOM" id="CLU_025194_2_1_5"/>
<dbReference type="OrthoDB" id="9802717at2"/>
<dbReference type="UniPathway" id="UPA00314">
    <property type="reaction ID" value="UER00076"/>
</dbReference>
<dbReference type="Proteomes" id="UP000002361">
    <property type="component" value="Chromosome"/>
</dbReference>
<dbReference type="GO" id="GO:0005829">
    <property type="term" value="C:cytosol"/>
    <property type="evidence" value="ECO:0007669"/>
    <property type="project" value="TreeGrafter"/>
</dbReference>
<dbReference type="GO" id="GO:0004013">
    <property type="term" value="F:adenosylhomocysteinase activity"/>
    <property type="evidence" value="ECO:0007669"/>
    <property type="project" value="UniProtKB-UniRule"/>
</dbReference>
<dbReference type="GO" id="GO:0071269">
    <property type="term" value="P:L-homocysteine biosynthetic process"/>
    <property type="evidence" value="ECO:0007669"/>
    <property type="project" value="UniProtKB-UniRule"/>
</dbReference>
<dbReference type="GO" id="GO:0006730">
    <property type="term" value="P:one-carbon metabolic process"/>
    <property type="evidence" value="ECO:0007669"/>
    <property type="project" value="UniProtKB-KW"/>
</dbReference>
<dbReference type="GO" id="GO:0033353">
    <property type="term" value="P:S-adenosylmethionine cycle"/>
    <property type="evidence" value="ECO:0007669"/>
    <property type="project" value="TreeGrafter"/>
</dbReference>
<dbReference type="CDD" id="cd00401">
    <property type="entry name" value="SAHH"/>
    <property type="match status" value="1"/>
</dbReference>
<dbReference type="FunFam" id="3.40.50.720:FF:000004">
    <property type="entry name" value="Adenosylhomocysteinase"/>
    <property type="match status" value="1"/>
</dbReference>
<dbReference type="Gene3D" id="3.40.50.1480">
    <property type="entry name" value="Adenosylhomocysteinase-like"/>
    <property type="match status" value="1"/>
</dbReference>
<dbReference type="Gene3D" id="3.40.50.720">
    <property type="entry name" value="NAD(P)-binding Rossmann-like Domain"/>
    <property type="match status" value="1"/>
</dbReference>
<dbReference type="HAMAP" id="MF_00563">
    <property type="entry name" value="AdoHcyase"/>
    <property type="match status" value="1"/>
</dbReference>
<dbReference type="InterPro" id="IPR042172">
    <property type="entry name" value="Adenosylhomocyst_ase-like_sf"/>
</dbReference>
<dbReference type="InterPro" id="IPR000043">
    <property type="entry name" value="Adenosylhomocysteinase-like"/>
</dbReference>
<dbReference type="InterPro" id="IPR015878">
    <property type="entry name" value="Ado_hCys_hydrolase_NAD-bd"/>
</dbReference>
<dbReference type="InterPro" id="IPR036291">
    <property type="entry name" value="NAD(P)-bd_dom_sf"/>
</dbReference>
<dbReference type="InterPro" id="IPR020082">
    <property type="entry name" value="S-Ado-L-homoCys_hydrolase_CS"/>
</dbReference>
<dbReference type="NCBIfam" id="TIGR00936">
    <property type="entry name" value="ahcY"/>
    <property type="match status" value="1"/>
</dbReference>
<dbReference type="NCBIfam" id="NF004005">
    <property type="entry name" value="PRK05476.2-3"/>
    <property type="match status" value="1"/>
</dbReference>
<dbReference type="PANTHER" id="PTHR23420">
    <property type="entry name" value="ADENOSYLHOMOCYSTEINASE"/>
    <property type="match status" value="1"/>
</dbReference>
<dbReference type="PANTHER" id="PTHR23420:SF0">
    <property type="entry name" value="ADENOSYLHOMOCYSTEINASE"/>
    <property type="match status" value="1"/>
</dbReference>
<dbReference type="Pfam" id="PF05221">
    <property type="entry name" value="AdoHcyase"/>
    <property type="match status" value="1"/>
</dbReference>
<dbReference type="Pfam" id="PF00670">
    <property type="entry name" value="AdoHcyase_NAD"/>
    <property type="match status" value="1"/>
</dbReference>
<dbReference type="PIRSF" id="PIRSF001109">
    <property type="entry name" value="Ad_hcy_hydrolase"/>
    <property type="match status" value="1"/>
</dbReference>
<dbReference type="SMART" id="SM00996">
    <property type="entry name" value="AdoHcyase"/>
    <property type="match status" value="1"/>
</dbReference>
<dbReference type="SMART" id="SM00997">
    <property type="entry name" value="AdoHcyase_NAD"/>
    <property type="match status" value="1"/>
</dbReference>
<dbReference type="SUPFAM" id="SSF52283">
    <property type="entry name" value="Formate/glycerate dehydrogenase catalytic domain-like"/>
    <property type="match status" value="1"/>
</dbReference>
<dbReference type="SUPFAM" id="SSF51735">
    <property type="entry name" value="NAD(P)-binding Rossmann-fold domains"/>
    <property type="match status" value="1"/>
</dbReference>
<dbReference type="PROSITE" id="PS00738">
    <property type="entry name" value="ADOHCYASE_1"/>
    <property type="match status" value="1"/>
</dbReference>
<dbReference type="PROSITE" id="PS00739">
    <property type="entry name" value="ADOHCYASE_2"/>
    <property type="match status" value="1"/>
</dbReference>
<name>SAHH_RHOCB</name>
<keyword id="KW-0963">Cytoplasm</keyword>
<keyword id="KW-0378">Hydrolase</keyword>
<keyword id="KW-0520">NAD</keyword>
<keyword id="KW-0554">One-carbon metabolism</keyword>
<keyword id="KW-1185">Reference proteome</keyword>
<feature type="chain" id="PRO_0000116983" description="Adenosylhomocysteinase">
    <location>
        <begin position="1"/>
        <end position="463"/>
    </location>
</feature>
<feature type="binding site" evidence="1">
    <location>
        <position position="54"/>
    </location>
    <ligand>
        <name>substrate</name>
    </ligand>
</feature>
<feature type="binding site" evidence="1">
    <location>
        <position position="128"/>
    </location>
    <ligand>
        <name>substrate</name>
    </ligand>
</feature>
<feature type="binding site" evidence="1">
    <location>
        <position position="189"/>
    </location>
    <ligand>
        <name>substrate</name>
    </ligand>
</feature>
<feature type="binding site" evidence="1">
    <location>
        <begin position="190"/>
        <end position="192"/>
    </location>
    <ligand>
        <name>NAD(+)</name>
        <dbReference type="ChEBI" id="CHEBI:57540"/>
    </ligand>
</feature>
<feature type="binding site" evidence="1">
    <location>
        <position position="219"/>
    </location>
    <ligand>
        <name>substrate</name>
    </ligand>
</feature>
<feature type="binding site" evidence="1">
    <location>
        <position position="223"/>
    </location>
    <ligand>
        <name>substrate</name>
    </ligand>
</feature>
<feature type="binding site" evidence="1">
    <location>
        <position position="224"/>
    </location>
    <ligand>
        <name>NAD(+)</name>
        <dbReference type="ChEBI" id="CHEBI:57540"/>
    </ligand>
</feature>
<feature type="binding site" evidence="1">
    <location>
        <begin position="253"/>
        <end position="258"/>
    </location>
    <ligand>
        <name>NAD(+)</name>
        <dbReference type="ChEBI" id="CHEBI:57540"/>
    </ligand>
</feature>
<feature type="binding site" evidence="1">
    <location>
        <position position="276"/>
    </location>
    <ligand>
        <name>NAD(+)</name>
        <dbReference type="ChEBI" id="CHEBI:57540"/>
    </ligand>
</feature>
<feature type="binding site" evidence="1">
    <location>
        <position position="311"/>
    </location>
    <ligand>
        <name>NAD(+)</name>
        <dbReference type="ChEBI" id="CHEBI:57540"/>
    </ligand>
</feature>
<feature type="binding site" evidence="1">
    <location>
        <begin position="332"/>
        <end position="334"/>
    </location>
    <ligand>
        <name>NAD(+)</name>
        <dbReference type="ChEBI" id="CHEBI:57540"/>
    </ligand>
</feature>
<feature type="binding site" evidence="1">
    <location>
        <position position="377"/>
    </location>
    <ligand>
        <name>NAD(+)</name>
        <dbReference type="ChEBI" id="CHEBI:57540"/>
    </ligand>
</feature>
<feature type="sequence conflict" description="In Ref. 1; AAA26094." evidence="2" ref="1">
    <original>E</original>
    <variation>D</variation>
    <location>
        <position position="157"/>
    </location>
</feature>
<protein>
    <recommendedName>
        <fullName evidence="1">Adenosylhomocysteinase</fullName>
        <ecNumber evidence="1">3.13.2.1</ecNumber>
    </recommendedName>
    <alternativeName>
        <fullName evidence="1">S-adenosyl-L-homocysteine hydrolase</fullName>
        <shortName evidence="1">AdoHcyase</shortName>
    </alternativeName>
</protein>
<evidence type="ECO:0000255" key="1">
    <source>
        <dbReference type="HAMAP-Rule" id="MF_00563"/>
    </source>
</evidence>
<evidence type="ECO:0000305" key="2"/>
<gene>
    <name evidence="1" type="primary">ahcY</name>
    <name type="ordered locus">RCAP_rcc00049</name>
</gene>
<comment type="function">
    <text evidence="1">May play a key role in the regulation of the intracellular concentration of adenosylhomocysteine.</text>
</comment>
<comment type="catalytic activity">
    <reaction evidence="1">
        <text>S-adenosyl-L-homocysteine + H2O = L-homocysteine + adenosine</text>
        <dbReference type="Rhea" id="RHEA:21708"/>
        <dbReference type="ChEBI" id="CHEBI:15377"/>
        <dbReference type="ChEBI" id="CHEBI:16335"/>
        <dbReference type="ChEBI" id="CHEBI:57856"/>
        <dbReference type="ChEBI" id="CHEBI:58199"/>
        <dbReference type="EC" id="3.13.2.1"/>
    </reaction>
</comment>
<comment type="cofactor">
    <cofactor>
        <name>NAD(+)</name>
        <dbReference type="ChEBI" id="CHEBI:57540"/>
    </cofactor>
    <text>Binds 1 NAD(+) per subunit.</text>
</comment>
<comment type="pathway">
    <text evidence="1">Amino-acid biosynthesis; L-homocysteine biosynthesis; L-homocysteine from S-adenosyl-L-homocysteine: step 1/1.</text>
</comment>
<comment type="subunit">
    <text>Homotetramer.</text>
</comment>
<comment type="subcellular location">
    <subcellularLocation>
        <location evidence="1">Cytoplasm</location>
    </subcellularLocation>
</comment>
<comment type="similarity">
    <text evidence="1">Belongs to the adenosylhomocysteinase family.</text>
</comment>
<organism>
    <name type="scientific">Rhodobacter capsulatus (strain ATCC BAA-309 / NBRC 16581 / SB1003)</name>
    <dbReference type="NCBI Taxonomy" id="272942"/>
    <lineage>
        <taxon>Bacteria</taxon>
        <taxon>Pseudomonadati</taxon>
        <taxon>Pseudomonadota</taxon>
        <taxon>Alphaproteobacteria</taxon>
        <taxon>Rhodobacterales</taxon>
        <taxon>Rhodobacter group</taxon>
        <taxon>Rhodobacter</taxon>
    </lineage>
</organism>
<sequence>MADYIVKDIKLAEFGRKELDIAETEMPGLMACREEFGPSQPLKGARIAGSLHMTIQTAVLIETLKALGADVRWASCNIFSTQDHAAAAIAAGGTPVFAVKGETLEEYWAYTDKIFQFPEGTCNMILDDGGDATLYILLGARVEAGETDLIATPTSEEEVCLFNQIKKRMVESPGWFTQQRAAIKGVSEETTTGVHRLYDLHKKGLLPFPAINVNDSVTKSKFDNKYGCKESLVDGIRRATDVMMAGKVAVVCGYGDVGKGSAASLRGAGARVKVTEVDPICALQAAMDGFEVVVLEDVVADADIFITTTGNKDVIRIEHMREMKDMAIVGNIGHFDNEIQVAALKNHKWTNIKDQVDMIEMPSGARIILLSEGRLLNLGNATGHPSFVMSASFTNQVLAQIELWTKGAEYQPGVYILPKSLDEKVARLHLKKIGVKLTTLRPDQAEYIGVTVEGPFKSDHYRY</sequence>